<feature type="chain" id="PRO_0000294803" description="Small ribosomal subunit protein uS11">
    <location>
        <begin position="1"/>
        <end position="134"/>
    </location>
</feature>
<feature type="region of interest" description="Disordered" evidence="2">
    <location>
        <begin position="114"/>
        <end position="134"/>
    </location>
</feature>
<feature type="compositionally biased region" description="Basic residues" evidence="2">
    <location>
        <begin position="123"/>
        <end position="134"/>
    </location>
</feature>
<protein>
    <recommendedName>
        <fullName evidence="1">Small ribosomal subunit protein uS11</fullName>
    </recommendedName>
    <alternativeName>
        <fullName evidence="3">30S ribosomal protein S11</fullName>
    </alternativeName>
</protein>
<keyword id="KW-0687">Ribonucleoprotein</keyword>
<keyword id="KW-0689">Ribosomal protein</keyword>
<keyword id="KW-0694">RNA-binding</keyword>
<keyword id="KW-0699">rRNA-binding</keyword>
<sequence length="134" mass="14651">MATNVKKVKKLRPKNVTVGIAHIHSSHQNTIISFTDKQGNVISWASSGSIGFKGTKKKTAYAATLATAAAAQKAREHGMREVIVELKGTGQGKEAARKQIITSGLNILLTKDVTPVPHNGTRPPRKWFKRQEKR</sequence>
<accession>Q4A8J6</accession>
<reference key="1">
    <citation type="journal article" date="2005" name="J. Bacteriol.">
        <title>Swine and poultry pathogens: the complete genome sequences of two strains of Mycoplasma hyopneumoniae and a strain of Mycoplasma synoviae.</title>
        <authorList>
            <person name="Vasconcelos A.T.R."/>
            <person name="Ferreira H.B."/>
            <person name="Bizarro C.V."/>
            <person name="Bonatto S.L."/>
            <person name="Carvalho M.O."/>
            <person name="Pinto P.M."/>
            <person name="Almeida D.F."/>
            <person name="Almeida L.G.P."/>
            <person name="Almeida R."/>
            <person name="Alves-Junior L."/>
            <person name="Assuncao E.N."/>
            <person name="Azevedo V.A.C."/>
            <person name="Bogo M.R."/>
            <person name="Brigido M.M."/>
            <person name="Brocchi M."/>
            <person name="Burity H.A."/>
            <person name="Camargo A.A."/>
            <person name="Camargo S.S."/>
            <person name="Carepo M.S."/>
            <person name="Carraro D.M."/>
            <person name="de Mattos Cascardo J.C."/>
            <person name="Castro L.A."/>
            <person name="Cavalcanti G."/>
            <person name="Chemale G."/>
            <person name="Collevatti R.G."/>
            <person name="Cunha C.W."/>
            <person name="Dallagiovanna B."/>
            <person name="Dambros B.P."/>
            <person name="Dellagostin O.A."/>
            <person name="Falcao C."/>
            <person name="Fantinatti-Garboggini F."/>
            <person name="Felipe M.S.S."/>
            <person name="Fiorentin L."/>
            <person name="Franco G.R."/>
            <person name="Freitas N.S.A."/>
            <person name="Frias D."/>
            <person name="Grangeiro T.B."/>
            <person name="Grisard E.C."/>
            <person name="Guimaraes C.T."/>
            <person name="Hungria M."/>
            <person name="Jardim S.N."/>
            <person name="Krieger M.A."/>
            <person name="Laurino J.P."/>
            <person name="Lima L.F.A."/>
            <person name="Lopes M.I."/>
            <person name="Loreto E.L.S."/>
            <person name="Madeira H.M.F."/>
            <person name="Manfio G.P."/>
            <person name="Maranhao A.Q."/>
            <person name="Martinkovics C.T."/>
            <person name="Medeiros S.R.B."/>
            <person name="Moreira M.A.M."/>
            <person name="Neiva M."/>
            <person name="Ramalho-Neto C.E."/>
            <person name="Nicolas M.F."/>
            <person name="Oliveira S.C."/>
            <person name="Paixao R.F.C."/>
            <person name="Pedrosa F.O."/>
            <person name="Pena S.D.J."/>
            <person name="Pereira M."/>
            <person name="Pereira-Ferrari L."/>
            <person name="Piffer I."/>
            <person name="Pinto L.S."/>
            <person name="Potrich D.P."/>
            <person name="Salim A.C.M."/>
            <person name="Santos F.R."/>
            <person name="Schmitt R."/>
            <person name="Schneider M.P.C."/>
            <person name="Schrank A."/>
            <person name="Schrank I.S."/>
            <person name="Schuck A.F."/>
            <person name="Seuanez H.N."/>
            <person name="Silva D.W."/>
            <person name="Silva R."/>
            <person name="Silva S.C."/>
            <person name="Soares C.M.A."/>
            <person name="Souza K.R.L."/>
            <person name="Souza R.C."/>
            <person name="Staats C.C."/>
            <person name="Steffens M.B.R."/>
            <person name="Teixeira S.M.R."/>
            <person name="Urmenyi T.P."/>
            <person name="Vainstein M.H."/>
            <person name="Zuccherato L.W."/>
            <person name="Simpson A.J.G."/>
            <person name="Zaha A."/>
        </authorList>
    </citation>
    <scope>NUCLEOTIDE SEQUENCE [LARGE SCALE GENOMIC DNA]</scope>
    <source>
        <strain>7448</strain>
    </source>
</reference>
<comment type="function">
    <text evidence="1">Located on the platform of the 30S subunit, it bridges several disparate RNA helices of the 16S rRNA. Forms part of the Shine-Dalgarno cleft in the 70S ribosome.</text>
</comment>
<comment type="subunit">
    <text evidence="1">Part of the 30S ribosomal subunit. Interacts with proteins S7 and S18. Binds to IF-3.</text>
</comment>
<comment type="similarity">
    <text evidence="1">Belongs to the universal ribosomal protein uS11 family.</text>
</comment>
<organism>
    <name type="scientific">Mesomycoplasma hyopneumoniae (strain 7448)</name>
    <name type="common">Mycoplasma hyopneumoniae</name>
    <dbReference type="NCBI Taxonomy" id="262722"/>
    <lineage>
        <taxon>Bacteria</taxon>
        <taxon>Bacillati</taxon>
        <taxon>Mycoplasmatota</taxon>
        <taxon>Mycoplasmoidales</taxon>
        <taxon>Metamycoplasmataceae</taxon>
        <taxon>Mesomycoplasma</taxon>
    </lineage>
</organism>
<dbReference type="EMBL" id="AE017244">
    <property type="protein sequence ID" value="AAZ53543.1"/>
    <property type="molecule type" value="Genomic_DNA"/>
</dbReference>
<dbReference type="RefSeq" id="WP_011206049.1">
    <property type="nucleotide sequence ID" value="NC_007332.1"/>
</dbReference>
<dbReference type="SMR" id="Q4A8J6"/>
<dbReference type="KEGG" id="mhp:MHP7448_0169"/>
<dbReference type="HOGENOM" id="CLU_072439_5_0_14"/>
<dbReference type="Proteomes" id="UP000000553">
    <property type="component" value="Chromosome"/>
</dbReference>
<dbReference type="GO" id="GO:1990904">
    <property type="term" value="C:ribonucleoprotein complex"/>
    <property type="evidence" value="ECO:0007669"/>
    <property type="project" value="UniProtKB-KW"/>
</dbReference>
<dbReference type="GO" id="GO:0005840">
    <property type="term" value="C:ribosome"/>
    <property type="evidence" value="ECO:0007669"/>
    <property type="project" value="UniProtKB-KW"/>
</dbReference>
<dbReference type="GO" id="GO:0019843">
    <property type="term" value="F:rRNA binding"/>
    <property type="evidence" value="ECO:0007669"/>
    <property type="project" value="UniProtKB-UniRule"/>
</dbReference>
<dbReference type="GO" id="GO:0003735">
    <property type="term" value="F:structural constituent of ribosome"/>
    <property type="evidence" value="ECO:0007669"/>
    <property type="project" value="InterPro"/>
</dbReference>
<dbReference type="GO" id="GO:0006412">
    <property type="term" value="P:translation"/>
    <property type="evidence" value="ECO:0007669"/>
    <property type="project" value="UniProtKB-UniRule"/>
</dbReference>
<dbReference type="Gene3D" id="3.30.420.80">
    <property type="entry name" value="Ribosomal protein S11"/>
    <property type="match status" value="1"/>
</dbReference>
<dbReference type="HAMAP" id="MF_01310">
    <property type="entry name" value="Ribosomal_uS11"/>
    <property type="match status" value="1"/>
</dbReference>
<dbReference type="InterPro" id="IPR001971">
    <property type="entry name" value="Ribosomal_uS11"/>
</dbReference>
<dbReference type="InterPro" id="IPR019981">
    <property type="entry name" value="Ribosomal_uS11_bac-type"/>
</dbReference>
<dbReference type="InterPro" id="IPR018102">
    <property type="entry name" value="Ribosomal_uS11_CS"/>
</dbReference>
<dbReference type="InterPro" id="IPR036967">
    <property type="entry name" value="Ribosomal_uS11_sf"/>
</dbReference>
<dbReference type="NCBIfam" id="NF003698">
    <property type="entry name" value="PRK05309.1"/>
    <property type="match status" value="1"/>
</dbReference>
<dbReference type="NCBIfam" id="TIGR03632">
    <property type="entry name" value="uS11_bact"/>
    <property type="match status" value="1"/>
</dbReference>
<dbReference type="PANTHER" id="PTHR11759">
    <property type="entry name" value="40S RIBOSOMAL PROTEIN S14/30S RIBOSOMAL PROTEIN S11"/>
    <property type="match status" value="1"/>
</dbReference>
<dbReference type="Pfam" id="PF00411">
    <property type="entry name" value="Ribosomal_S11"/>
    <property type="match status" value="1"/>
</dbReference>
<dbReference type="PIRSF" id="PIRSF002131">
    <property type="entry name" value="Ribosomal_S11"/>
    <property type="match status" value="1"/>
</dbReference>
<dbReference type="SUPFAM" id="SSF53137">
    <property type="entry name" value="Translational machinery components"/>
    <property type="match status" value="1"/>
</dbReference>
<dbReference type="PROSITE" id="PS00054">
    <property type="entry name" value="RIBOSOMAL_S11"/>
    <property type="match status" value="1"/>
</dbReference>
<proteinExistence type="inferred from homology"/>
<gene>
    <name evidence="1" type="primary">rpsK</name>
    <name type="ordered locus">MHP7448_0169</name>
</gene>
<name>RS11_MESH7</name>
<evidence type="ECO:0000255" key="1">
    <source>
        <dbReference type="HAMAP-Rule" id="MF_01310"/>
    </source>
</evidence>
<evidence type="ECO:0000256" key="2">
    <source>
        <dbReference type="SAM" id="MobiDB-lite"/>
    </source>
</evidence>
<evidence type="ECO:0000305" key="3"/>